<reference key="1">
    <citation type="submission" date="2008-02" db="EMBL/GenBank/DDBJ databases">
        <title>Complete sequence of Haemophilus somnus 2336.</title>
        <authorList>
            <consortium name="US DOE Joint Genome Institute"/>
            <person name="Siddaramappa S."/>
            <person name="Duncan A.J."/>
            <person name="Challacombe J.F."/>
            <person name="Rainey D."/>
            <person name="Gillaspy A.F."/>
            <person name="Carson M."/>
            <person name="Gipson J."/>
            <person name="Gipson M."/>
            <person name="Bruce D."/>
            <person name="Detter J.C."/>
            <person name="Han C.S."/>
            <person name="Land M."/>
            <person name="Tapia R."/>
            <person name="Thompson L.S."/>
            <person name="Orvis J."/>
            <person name="Zaitshik J."/>
            <person name="Barnes G."/>
            <person name="Brettin T.S."/>
            <person name="Dyer D.W."/>
            <person name="Inzana T.J."/>
        </authorList>
    </citation>
    <scope>NUCLEOTIDE SEQUENCE [LARGE SCALE GENOMIC DNA]</scope>
    <source>
        <strain>2336</strain>
    </source>
</reference>
<evidence type="ECO:0000255" key="1">
    <source>
        <dbReference type="HAMAP-Rule" id="MF_00412"/>
    </source>
</evidence>
<accession>B0USH2</accession>
<proteinExistence type="inferred from homology"/>
<gene>
    <name evidence="1" type="primary">proA</name>
    <name type="ordered locus">HSM_0733</name>
</gene>
<organism>
    <name type="scientific">Histophilus somni (strain 2336)</name>
    <name type="common">Haemophilus somnus</name>
    <dbReference type="NCBI Taxonomy" id="228400"/>
    <lineage>
        <taxon>Bacteria</taxon>
        <taxon>Pseudomonadati</taxon>
        <taxon>Pseudomonadota</taxon>
        <taxon>Gammaproteobacteria</taxon>
        <taxon>Pasteurellales</taxon>
        <taxon>Pasteurellaceae</taxon>
        <taxon>Histophilus</taxon>
    </lineage>
</organism>
<sequence length="418" mass="45644">MSLKEMGKNAKQAATILAQLSQQQKNTALQIIAEQLELQSDKILVENAKDIQLAKENGLSDAIIDRLLLTKERINSIAKDVRHIISLSDPIGQIIDGGILESGTKLERVRVPLGVIGVIYEARPNVTVDVATLCLKTSNAVILRGGKETNYSNKILVKVIQDALEQTGLPKNAVQAITDPDRNFVLELLKLDKYVDMIIPRGGAGLHEFCKQNSTIPVIIGGVGVCHVFVEESAEQDKALAVIDNAKTQRPSTCNTLETLLVQESIATEFLPKLVAHLKHKNVKYHADPTALSILEKQNAEVSIVQEQQLRQEWGSLDLNVVIVKDIQQAIAHITEYGTQHSEAILTSSPRLAHQFVSLVDAAAVYVNASTRFTDGGQFGLGAEVAVSTQKLHARGPMGLEALTTYKWVCSGDYTVRQ</sequence>
<dbReference type="EC" id="1.2.1.41" evidence="1"/>
<dbReference type="EMBL" id="CP000947">
    <property type="protein sequence ID" value="ACA32400.1"/>
    <property type="molecule type" value="Genomic_DNA"/>
</dbReference>
<dbReference type="RefSeq" id="WP_012341559.1">
    <property type="nucleotide sequence ID" value="NC_010519.1"/>
</dbReference>
<dbReference type="SMR" id="B0USH2"/>
<dbReference type="STRING" id="228400.HSM_0733"/>
<dbReference type="GeneID" id="31487019"/>
<dbReference type="KEGG" id="hsm:HSM_0733"/>
<dbReference type="HOGENOM" id="CLU_030231_0_0_6"/>
<dbReference type="UniPathway" id="UPA00098">
    <property type="reaction ID" value="UER00360"/>
</dbReference>
<dbReference type="GO" id="GO:0005737">
    <property type="term" value="C:cytoplasm"/>
    <property type="evidence" value="ECO:0007669"/>
    <property type="project" value="UniProtKB-SubCell"/>
</dbReference>
<dbReference type="GO" id="GO:0004350">
    <property type="term" value="F:glutamate-5-semialdehyde dehydrogenase activity"/>
    <property type="evidence" value="ECO:0007669"/>
    <property type="project" value="UniProtKB-UniRule"/>
</dbReference>
<dbReference type="GO" id="GO:0050661">
    <property type="term" value="F:NADP binding"/>
    <property type="evidence" value="ECO:0007669"/>
    <property type="project" value="InterPro"/>
</dbReference>
<dbReference type="GO" id="GO:0055129">
    <property type="term" value="P:L-proline biosynthetic process"/>
    <property type="evidence" value="ECO:0007669"/>
    <property type="project" value="UniProtKB-UniRule"/>
</dbReference>
<dbReference type="CDD" id="cd07079">
    <property type="entry name" value="ALDH_F18-19_ProA-GPR"/>
    <property type="match status" value="1"/>
</dbReference>
<dbReference type="FunFam" id="3.40.309.10:FF:000028">
    <property type="entry name" value="Gamma-glutamyl phosphate reductase"/>
    <property type="match status" value="1"/>
</dbReference>
<dbReference type="Gene3D" id="3.40.605.10">
    <property type="entry name" value="Aldehyde Dehydrogenase, Chain A, domain 1"/>
    <property type="match status" value="1"/>
</dbReference>
<dbReference type="Gene3D" id="3.40.309.10">
    <property type="entry name" value="Aldehyde Dehydrogenase, Chain A, domain 2"/>
    <property type="match status" value="1"/>
</dbReference>
<dbReference type="HAMAP" id="MF_00412">
    <property type="entry name" value="ProA"/>
    <property type="match status" value="1"/>
</dbReference>
<dbReference type="InterPro" id="IPR016161">
    <property type="entry name" value="Ald_DH/histidinol_DH"/>
</dbReference>
<dbReference type="InterPro" id="IPR016163">
    <property type="entry name" value="Ald_DH_C"/>
</dbReference>
<dbReference type="InterPro" id="IPR016162">
    <property type="entry name" value="Ald_DH_N"/>
</dbReference>
<dbReference type="InterPro" id="IPR015590">
    <property type="entry name" value="Aldehyde_DH_dom"/>
</dbReference>
<dbReference type="InterPro" id="IPR020593">
    <property type="entry name" value="G-glutamylP_reductase_CS"/>
</dbReference>
<dbReference type="InterPro" id="IPR012134">
    <property type="entry name" value="Glu-5-SA_DH"/>
</dbReference>
<dbReference type="InterPro" id="IPR000965">
    <property type="entry name" value="GPR_dom"/>
</dbReference>
<dbReference type="NCBIfam" id="NF001221">
    <property type="entry name" value="PRK00197.1"/>
    <property type="match status" value="1"/>
</dbReference>
<dbReference type="NCBIfam" id="TIGR00407">
    <property type="entry name" value="proA"/>
    <property type="match status" value="1"/>
</dbReference>
<dbReference type="PANTHER" id="PTHR11063:SF8">
    <property type="entry name" value="DELTA-1-PYRROLINE-5-CARBOXYLATE SYNTHASE"/>
    <property type="match status" value="1"/>
</dbReference>
<dbReference type="PANTHER" id="PTHR11063">
    <property type="entry name" value="GLUTAMATE SEMIALDEHYDE DEHYDROGENASE"/>
    <property type="match status" value="1"/>
</dbReference>
<dbReference type="Pfam" id="PF00171">
    <property type="entry name" value="Aldedh"/>
    <property type="match status" value="1"/>
</dbReference>
<dbReference type="PIRSF" id="PIRSF000151">
    <property type="entry name" value="GPR"/>
    <property type="match status" value="1"/>
</dbReference>
<dbReference type="SUPFAM" id="SSF53720">
    <property type="entry name" value="ALDH-like"/>
    <property type="match status" value="1"/>
</dbReference>
<dbReference type="PROSITE" id="PS01223">
    <property type="entry name" value="PROA"/>
    <property type="match status" value="1"/>
</dbReference>
<keyword id="KW-0028">Amino-acid biosynthesis</keyword>
<keyword id="KW-0963">Cytoplasm</keyword>
<keyword id="KW-0521">NADP</keyword>
<keyword id="KW-0560">Oxidoreductase</keyword>
<keyword id="KW-0641">Proline biosynthesis</keyword>
<name>PROA_HISS2</name>
<protein>
    <recommendedName>
        <fullName evidence="1">Gamma-glutamyl phosphate reductase</fullName>
        <shortName evidence="1">GPR</shortName>
        <ecNumber evidence="1">1.2.1.41</ecNumber>
    </recommendedName>
    <alternativeName>
        <fullName evidence="1">Glutamate-5-semialdehyde dehydrogenase</fullName>
    </alternativeName>
    <alternativeName>
        <fullName evidence="1">Glutamyl-gamma-semialdehyde dehydrogenase</fullName>
        <shortName evidence="1">GSA dehydrogenase</shortName>
    </alternativeName>
</protein>
<feature type="chain" id="PRO_0000340883" description="Gamma-glutamyl phosphate reductase">
    <location>
        <begin position="1"/>
        <end position="418"/>
    </location>
</feature>
<comment type="function">
    <text evidence="1">Catalyzes the NADPH-dependent reduction of L-glutamate 5-phosphate into L-glutamate 5-semialdehyde and phosphate. The product spontaneously undergoes cyclization to form 1-pyrroline-5-carboxylate.</text>
</comment>
<comment type="catalytic activity">
    <reaction evidence="1">
        <text>L-glutamate 5-semialdehyde + phosphate + NADP(+) = L-glutamyl 5-phosphate + NADPH + H(+)</text>
        <dbReference type="Rhea" id="RHEA:19541"/>
        <dbReference type="ChEBI" id="CHEBI:15378"/>
        <dbReference type="ChEBI" id="CHEBI:43474"/>
        <dbReference type="ChEBI" id="CHEBI:57783"/>
        <dbReference type="ChEBI" id="CHEBI:58066"/>
        <dbReference type="ChEBI" id="CHEBI:58274"/>
        <dbReference type="ChEBI" id="CHEBI:58349"/>
        <dbReference type="EC" id="1.2.1.41"/>
    </reaction>
</comment>
<comment type="pathway">
    <text evidence="1">Amino-acid biosynthesis; L-proline biosynthesis; L-glutamate 5-semialdehyde from L-glutamate: step 2/2.</text>
</comment>
<comment type="subcellular location">
    <subcellularLocation>
        <location evidence="1">Cytoplasm</location>
    </subcellularLocation>
</comment>
<comment type="similarity">
    <text evidence="1">Belongs to the gamma-glutamyl phosphate reductase family.</text>
</comment>